<comment type="function">
    <text>Catalyzes the synthesis of catechin from 3,4-cis-leucocyanidin. Also synthesizes afzelechin and gallocatechin.</text>
</comment>
<comment type="catalytic activity">
    <reaction>
        <text>(2R,3S)-catechin + NADP(+) + H2O = (2R,3S,4S)-leucocyanidin + NADPH + H(+)</text>
        <dbReference type="Rhea" id="RHEA:10616"/>
        <dbReference type="ChEBI" id="CHEBI:11412"/>
        <dbReference type="ChEBI" id="CHEBI:15377"/>
        <dbReference type="ChEBI" id="CHEBI:15378"/>
        <dbReference type="ChEBI" id="CHEBI:15600"/>
        <dbReference type="ChEBI" id="CHEBI:57783"/>
        <dbReference type="ChEBI" id="CHEBI:58349"/>
        <dbReference type="EC" id="1.17.1.3"/>
    </reaction>
</comment>
<comment type="pathway">
    <text>Flavonoid metabolism; proanthocyanidin biosynthesis.</text>
</comment>
<comment type="subunit">
    <text>Monomer.</text>
</comment>
<comment type="similarity">
    <text evidence="2">Belongs to the NmrA-type oxidoreductase family. Isoflavone reductase subfamily.</text>
</comment>
<feature type="chain" id="PRO_0000204553" description="Leucoanthocyanidin reductase">
    <location>
        <begin position="1"/>
        <end position="382"/>
    </location>
</feature>
<feature type="active site" description="Proton acceptor" evidence="1">
    <location>
        <position position="142"/>
    </location>
</feature>
<feature type="binding site" evidence="1">
    <location>
        <begin position="19"/>
        <end position="25"/>
    </location>
    <ligand>
        <name>NADP(+)</name>
        <dbReference type="ChEBI" id="CHEBI:58349"/>
    </ligand>
</feature>
<feature type="binding site" evidence="1">
    <location>
        <position position="44"/>
    </location>
    <ligand>
        <name>NADP(+)</name>
        <dbReference type="ChEBI" id="CHEBI:58349"/>
    </ligand>
</feature>
<feature type="binding site" evidence="1">
    <location>
        <position position="52"/>
    </location>
    <ligand>
        <name>NADP(+)</name>
        <dbReference type="ChEBI" id="CHEBI:58349"/>
    </ligand>
</feature>
<feature type="binding site" evidence="1">
    <location>
        <position position="146"/>
    </location>
    <ligand>
        <name>NADP(+)</name>
        <dbReference type="ChEBI" id="CHEBI:58349"/>
    </ligand>
</feature>
<proteinExistence type="evidence at protein level"/>
<reference key="1">
    <citation type="journal article" date="2003" name="J. Biol. Chem.">
        <title>Proanthocyanidin biosynthesis in plants. Purification of legume leucoanthocyanidin reductase and molecular cloning of its cDNA.</title>
        <authorList>
            <person name="Tanner G.J."/>
            <person name="Francki K.T."/>
            <person name="Abrahams S."/>
            <person name="Watson J.M."/>
            <person name="Larkin P.J."/>
            <person name="Ashton A.R."/>
        </authorList>
    </citation>
    <scope>NUCLEOTIDE SEQUENCE [MRNA]</scope>
    <scope>PARTIAL PROTEIN SEQUENCE</scope>
    <scope>CHARACTERIZATION</scope>
    <source>
        <tissue>Leaf</tissue>
    </source>
</reference>
<keyword id="KW-0903">Direct protein sequencing</keyword>
<keyword id="KW-0521">NADP</keyword>
<keyword id="KW-0560">Oxidoreductase</keyword>
<protein>
    <recommendedName>
        <fullName>Leucoanthocyanidin reductase</fullName>
        <shortName>Leucocyanidin reductase</shortName>
        <ecNumber>1.17.1.3</ecNumber>
    </recommendedName>
</protein>
<accession>Q84V83</accession>
<sequence length="382" mass="42665">MTVSGAIPSMTKNRTLVVGGTGFIGQFITKASLGFGYPTFLLVRPGPVSPSKAVIIKTFQDKGAKVIYGVINDKECMEKILKEYEIDVVISLVGGARLLDQLTLLEAIKSVKTIKRFLPSEFGHDVDRTDPVEPGLTMYKEKRLVRRAVEEYGIPFTNICCNSIASWPYYDNCHPSQVPPPMDQFQIYGDGNTKAYFIDGNDIGKFTMKTIDDIRTLNKNVHFRPSSNCYSINELASLWEKKIGRTLPRFTVTADKLLAHAAENIIPESIVSSFTHDIFINGCQVNFSIDEHSDVEIDTLYPDEKFRSLDDCYEDFVPMVHDKIHAGKSGEIKIKDGKPLVQTGTIEEINKDIKTLVETQPNEEIKKDMKALVEAVPISAMG</sequence>
<evidence type="ECO:0000250" key="1">
    <source>
        <dbReference type="UniProtKB" id="Q9LD14"/>
    </source>
</evidence>
<evidence type="ECO:0000305" key="2"/>
<dbReference type="EC" id="1.17.1.3"/>
<dbReference type="EMBL" id="AJ550154">
    <property type="protein sequence ID" value="CAD79341.1"/>
    <property type="molecule type" value="mRNA"/>
</dbReference>
<dbReference type="SMR" id="Q84V83"/>
<dbReference type="KEGG" id="ag:CAD79341"/>
<dbReference type="BRENDA" id="1.17.1.3">
    <property type="organism ID" value="1878"/>
</dbReference>
<dbReference type="UniPathway" id="UPA00952"/>
<dbReference type="GO" id="GO:0033788">
    <property type="term" value="F:leucoanthocyanidin reductase activity"/>
    <property type="evidence" value="ECO:0007669"/>
    <property type="project" value="UniProtKB-EC"/>
</dbReference>
<dbReference type="GO" id="GO:0009807">
    <property type="term" value="P:lignan biosynthetic process"/>
    <property type="evidence" value="ECO:0007669"/>
    <property type="project" value="UniProtKB-ARBA"/>
</dbReference>
<dbReference type="GO" id="GO:0010023">
    <property type="term" value="P:proanthocyanidin biosynthetic process"/>
    <property type="evidence" value="ECO:0007669"/>
    <property type="project" value="UniProtKB-UniPathway"/>
</dbReference>
<dbReference type="CDD" id="cd05259">
    <property type="entry name" value="PCBER_SDR_a"/>
    <property type="match status" value="1"/>
</dbReference>
<dbReference type="Gene3D" id="3.40.50.720">
    <property type="entry name" value="NAD(P)-binding Rossmann-like Domain"/>
    <property type="match status" value="1"/>
</dbReference>
<dbReference type="Gene3D" id="3.90.25.10">
    <property type="entry name" value="UDP-galactose 4-epimerase, domain 1"/>
    <property type="match status" value="1"/>
</dbReference>
<dbReference type="InterPro" id="IPR036291">
    <property type="entry name" value="NAD(P)-bd_dom_sf"/>
</dbReference>
<dbReference type="InterPro" id="IPR008030">
    <property type="entry name" value="NmrA-like"/>
</dbReference>
<dbReference type="InterPro" id="IPR050608">
    <property type="entry name" value="NmrA-type/Isoflavone_red_sf"/>
</dbReference>
<dbReference type="InterPro" id="IPR045312">
    <property type="entry name" value="PCBER-like"/>
</dbReference>
<dbReference type="PANTHER" id="PTHR43349:SF16">
    <property type="entry name" value="LEUCANTHOCYANIDIN REDUCTASE"/>
    <property type="match status" value="1"/>
</dbReference>
<dbReference type="PANTHER" id="PTHR43349">
    <property type="entry name" value="PINORESINOL REDUCTASE-RELATED"/>
    <property type="match status" value="1"/>
</dbReference>
<dbReference type="Pfam" id="PF05368">
    <property type="entry name" value="NmrA"/>
    <property type="match status" value="1"/>
</dbReference>
<dbReference type="SUPFAM" id="SSF51735">
    <property type="entry name" value="NAD(P)-binding Rossmann-fold domains"/>
    <property type="match status" value="1"/>
</dbReference>
<gene>
    <name type="primary">LAR</name>
</gene>
<name>LAR_DESUN</name>
<organism>
    <name type="scientific">Desmodium uncinatum</name>
    <name type="common">Silverleaf Spanish clover</name>
    <name type="synonym">Hedysarum uncinatum</name>
    <dbReference type="NCBI Taxonomy" id="225101"/>
    <lineage>
        <taxon>Eukaryota</taxon>
        <taxon>Viridiplantae</taxon>
        <taxon>Streptophyta</taxon>
        <taxon>Embryophyta</taxon>
        <taxon>Tracheophyta</taxon>
        <taxon>Spermatophyta</taxon>
        <taxon>Magnoliopsida</taxon>
        <taxon>eudicotyledons</taxon>
        <taxon>Gunneridae</taxon>
        <taxon>Pentapetalae</taxon>
        <taxon>rosids</taxon>
        <taxon>fabids</taxon>
        <taxon>Fabales</taxon>
        <taxon>Fabaceae</taxon>
        <taxon>Papilionoideae</taxon>
        <taxon>50 kb inversion clade</taxon>
        <taxon>NPAAA clade</taxon>
        <taxon>indigoferoid/millettioid clade</taxon>
        <taxon>Desmodieae</taxon>
        <taxon>Desmodium</taxon>
    </lineage>
</organism>